<accession>O86220</accession>
<reference key="1">
    <citation type="journal article" date="1995" name="Science">
        <title>Whole-genome random sequencing and assembly of Haemophilus influenzae Rd.</title>
        <authorList>
            <person name="Fleischmann R.D."/>
            <person name="Adams M.D."/>
            <person name="White O."/>
            <person name="Clayton R.A."/>
            <person name="Kirkness E.F."/>
            <person name="Kerlavage A.R."/>
            <person name="Bult C.J."/>
            <person name="Tomb J.-F."/>
            <person name="Dougherty B.A."/>
            <person name="Merrick J.M."/>
            <person name="McKenney K."/>
            <person name="Sutton G.G."/>
            <person name="FitzHugh W."/>
            <person name="Fields C.A."/>
            <person name="Gocayne J.D."/>
            <person name="Scott J.D."/>
            <person name="Shirley R."/>
            <person name="Liu L.-I."/>
            <person name="Glodek A."/>
            <person name="Kelley J.M."/>
            <person name="Weidman J.F."/>
            <person name="Phillips C.A."/>
            <person name="Spriggs T."/>
            <person name="Hedblom E."/>
            <person name="Cotton M.D."/>
            <person name="Utterback T.R."/>
            <person name="Hanna M.C."/>
            <person name="Nguyen D.T."/>
            <person name="Saudek D.M."/>
            <person name="Brandon R.C."/>
            <person name="Fine L.D."/>
            <person name="Fritchman J.L."/>
            <person name="Fuhrmann J.L."/>
            <person name="Geoghagen N.S.M."/>
            <person name="Gnehm C.L."/>
            <person name="McDonald L.A."/>
            <person name="Small K.V."/>
            <person name="Fraser C.M."/>
            <person name="Smith H.O."/>
            <person name="Venter J.C."/>
        </authorList>
    </citation>
    <scope>NUCLEOTIDE SEQUENCE [LARGE SCALE GENOMIC DNA]</scope>
    <source>
        <strain>ATCC 51907 / DSM 11121 / KW20 / Rd</strain>
    </source>
</reference>
<reference key="2">
    <citation type="submission" date="1998-05" db="EMBL/GenBank/DDBJ databases">
        <authorList>
            <person name="White O."/>
            <person name="Clayton R.A."/>
            <person name="Kerlavage A.R."/>
            <person name="Fleischmann R.D."/>
            <person name="Peterson J."/>
            <person name="Hickey E."/>
            <person name="Dodson R."/>
            <person name="Gwinn M."/>
        </authorList>
    </citation>
    <scope>IDENTIFICATION</scope>
</reference>
<dbReference type="EMBL" id="L42023">
    <property type="protein sequence ID" value="AAC21832.1"/>
    <property type="molecule type" value="Genomic_DNA"/>
</dbReference>
<dbReference type="STRING" id="71421.HI_0148.1"/>
<dbReference type="EnsemblBacteria" id="AAC21832">
    <property type="protein sequence ID" value="AAC21832"/>
    <property type="gene ID" value="HI_0148.1"/>
</dbReference>
<dbReference type="KEGG" id="hin:HI_0148.1"/>
<dbReference type="HOGENOM" id="CLU_2788076_0_0_6"/>
<dbReference type="Proteomes" id="UP000000579">
    <property type="component" value="Chromosome"/>
</dbReference>
<dbReference type="GO" id="GO:0005886">
    <property type="term" value="C:plasma membrane"/>
    <property type="evidence" value="ECO:0007669"/>
    <property type="project" value="UniProtKB-SubCell"/>
</dbReference>
<keyword id="KW-1003">Cell membrane</keyword>
<keyword id="KW-0472">Membrane</keyword>
<keyword id="KW-1185">Reference proteome</keyword>
<keyword id="KW-0812">Transmembrane</keyword>
<keyword id="KW-1133">Transmembrane helix</keyword>
<organism>
    <name type="scientific">Haemophilus influenzae (strain ATCC 51907 / DSM 11121 / KW20 / Rd)</name>
    <dbReference type="NCBI Taxonomy" id="71421"/>
    <lineage>
        <taxon>Bacteria</taxon>
        <taxon>Pseudomonadati</taxon>
        <taxon>Pseudomonadota</taxon>
        <taxon>Gammaproteobacteria</taxon>
        <taxon>Pasteurellales</taxon>
        <taxon>Pasteurellaceae</taxon>
        <taxon>Haemophilus</taxon>
    </lineage>
</organism>
<proteinExistence type="predicted"/>
<gene>
    <name type="ordered locus">HI_0148.1</name>
</gene>
<name>Y148A_HAEIN</name>
<evidence type="ECO:0000255" key="1"/>
<evidence type="ECO:0000305" key="2"/>
<sequence>MLFIPPPLLCLFIAIAMYFLPKIASYSVHFSVIVFVISLSFLIALSSVMQSLYVKPPLILVTLKAQQN</sequence>
<protein>
    <recommendedName>
        <fullName>Uncharacterized protein HI_0148.1</fullName>
    </recommendedName>
</protein>
<feature type="chain" id="PRO_0000077894" description="Uncharacterized protein HI_0148.1">
    <location>
        <begin position="1"/>
        <end position="68"/>
    </location>
</feature>
<feature type="transmembrane region" description="Helical" evidence="1">
    <location>
        <begin position="1"/>
        <end position="21"/>
    </location>
</feature>
<feature type="transmembrane region" description="Helical" evidence="1">
    <location>
        <begin position="28"/>
        <end position="48"/>
    </location>
</feature>
<comment type="subcellular location">
    <subcellularLocation>
        <location evidence="2">Cell membrane</location>
        <topology evidence="2">Multi-pass membrane protein</topology>
    </subcellularLocation>
</comment>